<evidence type="ECO:0000255" key="1"/>
<evidence type="ECO:0000305" key="2"/>
<protein>
    <recommendedName>
        <fullName>Probable thymidylate kinase</fullName>
        <ecNumber>2.7.4.9</ecNumber>
    </recommendedName>
    <alternativeName>
        <fullName>dTMP kinase</fullName>
    </alternativeName>
</protein>
<keyword id="KW-0067">ATP-binding</keyword>
<keyword id="KW-0418">Kinase</keyword>
<keyword id="KW-0545">Nucleotide biosynthesis</keyword>
<keyword id="KW-0547">Nucleotide-binding</keyword>
<keyword id="KW-1185">Reference proteome</keyword>
<keyword id="KW-0808">Transferase</keyword>
<accession>Q975E6</accession>
<accession>F9VMZ4</accession>
<feature type="chain" id="PRO_0000155400" description="Probable thymidylate kinase">
    <location>
        <begin position="1"/>
        <end position="190"/>
    </location>
</feature>
<feature type="binding site" evidence="1">
    <location>
        <begin position="9"/>
        <end position="16"/>
    </location>
    <ligand>
        <name>ATP</name>
        <dbReference type="ChEBI" id="CHEBI:30616"/>
    </ligand>
</feature>
<gene>
    <name type="primary">tmk1</name>
    <name type="ordered locus">STK_04620</name>
</gene>
<name>KTHY1_SULTO</name>
<sequence>MPRFISFEGIDGAGKTTLAKKVYEVLKKKGYNVILTQEPFTREITELIKKAGWNDPVLLTLLFSADRAFHIKWIMEQKPEIVLMDRYFHSTIAYQSVLGLDEKWIEEVNSKFPKPDIVFLLDIKVNEAIKRIRKDDQFNFEEKIATLEAVRKKYLELARKYNFIVLDAMSKIEELTEKTVQIICSLVKCS</sequence>
<comment type="catalytic activity">
    <reaction>
        <text>dTMP + ATP = dTDP + ADP</text>
        <dbReference type="Rhea" id="RHEA:13517"/>
        <dbReference type="ChEBI" id="CHEBI:30616"/>
        <dbReference type="ChEBI" id="CHEBI:58369"/>
        <dbReference type="ChEBI" id="CHEBI:63528"/>
        <dbReference type="ChEBI" id="CHEBI:456216"/>
        <dbReference type="EC" id="2.7.4.9"/>
    </reaction>
</comment>
<comment type="similarity">
    <text evidence="2">Belongs to the thymidylate kinase family.</text>
</comment>
<reference key="1">
    <citation type="journal article" date="2001" name="DNA Res.">
        <title>Complete genome sequence of an aerobic thermoacidophilic Crenarchaeon, Sulfolobus tokodaii strain7.</title>
        <authorList>
            <person name="Kawarabayasi Y."/>
            <person name="Hino Y."/>
            <person name="Horikawa H."/>
            <person name="Jin-no K."/>
            <person name="Takahashi M."/>
            <person name="Sekine M."/>
            <person name="Baba S."/>
            <person name="Ankai A."/>
            <person name="Kosugi H."/>
            <person name="Hosoyama A."/>
            <person name="Fukui S."/>
            <person name="Nagai Y."/>
            <person name="Nishijima K."/>
            <person name="Otsuka R."/>
            <person name="Nakazawa H."/>
            <person name="Takamiya M."/>
            <person name="Kato Y."/>
            <person name="Yoshizawa T."/>
            <person name="Tanaka T."/>
            <person name="Kudoh Y."/>
            <person name="Yamazaki J."/>
            <person name="Kushida N."/>
            <person name="Oguchi A."/>
            <person name="Aoki K."/>
            <person name="Masuda S."/>
            <person name="Yanagii M."/>
            <person name="Nishimura M."/>
            <person name="Yamagishi A."/>
            <person name="Oshima T."/>
            <person name="Kikuchi H."/>
        </authorList>
    </citation>
    <scope>NUCLEOTIDE SEQUENCE [LARGE SCALE GENOMIC DNA]</scope>
    <source>
        <strain>DSM 16993 / JCM 10545 / NBRC 100140 / 7</strain>
    </source>
</reference>
<proteinExistence type="inferred from homology"/>
<dbReference type="EC" id="2.7.4.9"/>
<dbReference type="EMBL" id="BA000023">
    <property type="protein sequence ID" value="BAK54291.1"/>
    <property type="molecule type" value="Genomic_DNA"/>
</dbReference>
<dbReference type="RefSeq" id="WP_010978438.1">
    <property type="nucleotide sequence ID" value="NC_003106.2"/>
</dbReference>
<dbReference type="SMR" id="Q975E6"/>
<dbReference type="STRING" id="273063.STK_04620"/>
<dbReference type="GeneID" id="1458404"/>
<dbReference type="KEGG" id="sto:STK_04620"/>
<dbReference type="PATRIC" id="fig|273063.9.peg.536"/>
<dbReference type="eggNOG" id="arCOG01891">
    <property type="taxonomic scope" value="Archaea"/>
</dbReference>
<dbReference type="OrthoDB" id="43083at2157"/>
<dbReference type="Proteomes" id="UP000001015">
    <property type="component" value="Chromosome"/>
</dbReference>
<dbReference type="GO" id="GO:0005737">
    <property type="term" value="C:cytoplasm"/>
    <property type="evidence" value="ECO:0007669"/>
    <property type="project" value="TreeGrafter"/>
</dbReference>
<dbReference type="GO" id="GO:0005524">
    <property type="term" value="F:ATP binding"/>
    <property type="evidence" value="ECO:0007669"/>
    <property type="project" value="UniProtKB-UniRule"/>
</dbReference>
<dbReference type="GO" id="GO:0004798">
    <property type="term" value="F:dTMP kinase activity"/>
    <property type="evidence" value="ECO:0007669"/>
    <property type="project" value="UniProtKB-UniRule"/>
</dbReference>
<dbReference type="GO" id="GO:0006233">
    <property type="term" value="P:dTDP biosynthetic process"/>
    <property type="evidence" value="ECO:0007669"/>
    <property type="project" value="InterPro"/>
</dbReference>
<dbReference type="GO" id="GO:0006235">
    <property type="term" value="P:dTTP biosynthetic process"/>
    <property type="evidence" value="ECO:0007669"/>
    <property type="project" value="UniProtKB-UniRule"/>
</dbReference>
<dbReference type="GO" id="GO:0006227">
    <property type="term" value="P:dUDP biosynthetic process"/>
    <property type="evidence" value="ECO:0007669"/>
    <property type="project" value="TreeGrafter"/>
</dbReference>
<dbReference type="CDD" id="cd01672">
    <property type="entry name" value="TMPK"/>
    <property type="match status" value="1"/>
</dbReference>
<dbReference type="Gene3D" id="3.40.50.300">
    <property type="entry name" value="P-loop containing nucleotide triphosphate hydrolases"/>
    <property type="match status" value="1"/>
</dbReference>
<dbReference type="HAMAP" id="MF_00165">
    <property type="entry name" value="Thymidylate_kinase"/>
    <property type="match status" value="1"/>
</dbReference>
<dbReference type="InterPro" id="IPR027417">
    <property type="entry name" value="P-loop_NTPase"/>
</dbReference>
<dbReference type="InterPro" id="IPR039430">
    <property type="entry name" value="Thymidylate_kin-like_dom"/>
</dbReference>
<dbReference type="InterPro" id="IPR018095">
    <property type="entry name" value="Thymidylate_kin_CS"/>
</dbReference>
<dbReference type="InterPro" id="IPR018094">
    <property type="entry name" value="Thymidylate_kinase"/>
</dbReference>
<dbReference type="NCBIfam" id="TIGR00041">
    <property type="entry name" value="DTMP_kinase"/>
    <property type="match status" value="1"/>
</dbReference>
<dbReference type="PANTHER" id="PTHR10344">
    <property type="entry name" value="THYMIDYLATE KINASE"/>
    <property type="match status" value="1"/>
</dbReference>
<dbReference type="PANTHER" id="PTHR10344:SF4">
    <property type="entry name" value="UMP-CMP KINASE 2, MITOCHONDRIAL"/>
    <property type="match status" value="1"/>
</dbReference>
<dbReference type="Pfam" id="PF02223">
    <property type="entry name" value="Thymidylate_kin"/>
    <property type="match status" value="1"/>
</dbReference>
<dbReference type="SUPFAM" id="SSF52540">
    <property type="entry name" value="P-loop containing nucleoside triphosphate hydrolases"/>
    <property type="match status" value="1"/>
</dbReference>
<dbReference type="PROSITE" id="PS01331">
    <property type="entry name" value="THYMIDYLATE_KINASE"/>
    <property type="match status" value="1"/>
</dbReference>
<organism>
    <name type="scientific">Sulfurisphaera tokodaii (strain DSM 16993 / JCM 10545 / NBRC 100140 / 7)</name>
    <name type="common">Sulfolobus tokodaii</name>
    <dbReference type="NCBI Taxonomy" id="273063"/>
    <lineage>
        <taxon>Archaea</taxon>
        <taxon>Thermoproteota</taxon>
        <taxon>Thermoprotei</taxon>
        <taxon>Sulfolobales</taxon>
        <taxon>Sulfolobaceae</taxon>
        <taxon>Sulfurisphaera</taxon>
    </lineage>
</organism>